<sequence length="264" mass="28352">MLLTIDVRNTSIELGLFAGSGTHARLERHWRIHTNPLLTADELAMQLRGLIGGPLEQVIGVAALSTVPPVLRELRTMLARYWSHVPHVVVEPGVRTGIPLLVDNPKEIGADRIVNALAAHQRFGGPAIVVDFGTATTVDLVSAKGEFLGGVIAPGVAISGEALIEKAGLRRVELARPRSVVGKNTVEAIQSGAVFGFAGLVDGLIDRIRDEFDAFAGDDVTVVATGISAPLIVPESETIDQHEPHLTLTGLLRVYERNQQRRRT</sequence>
<evidence type="ECO:0000255" key="1">
    <source>
        <dbReference type="HAMAP-Rule" id="MF_01274"/>
    </source>
</evidence>
<dbReference type="EC" id="2.7.1.33" evidence="1"/>
<dbReference type="EMBL" id="AP006618">
    <property type="protein sequence ID" value="BAD55250.1"/>
    <property type="molecule type" value="Genomic_DNA"/>
</dbReference>
<dbReference type="RefSeq" id="WP_011206937.1">
    <property type="nucleotide sequence ID" value="NC_006361.1"/>
</dbReference>
<dbReference type="SMR" id="Q5Z2U1"/>
<dbReference type="STRING" id="247156.NFA_4080"/>
<dbReference type="GeneID" id="61131246"/>
<dbReference type="KEGG" id="nfa:NFA_4080"/>
<dbReference type="eggNOG" id="COG1521">
    <property type="taxonomic scope" value="Bacteria"/>
</dbReference>
<dbReference type="HOGENOM" id="CLU_066627_1_0_11"/>
<dbReference type="OrthoDB" id="9804707at2"/>
<dbReference type="UniPathway" id="UPA00241">
    <property type="reaction ID" value="UER00352"/>
</dbReference>
<dbReference type="Proteomes" id="UP000006820">
    <property type="component" value="Chromosome"/>
</dbReference>
<dbReference type="GO" id="GO:0005737">
    <property type="term" value="C:cytoplasm"/>
    <property type="evidence" value="ECO:0007669"/>
    <property type="project" value="UniProtKB-SubCell"/>
</dbReference>
<dbReference type="GO" id="GO:0005524">
    <property type="term" value="F:ATP binding"/>
    <property type="evidence" value="ECO:0007669"/>
    <property type="project" value="UniProtKB-UniRule"/>
</dbReference>
<dbReference type="GO" id="GO:0046872">
    <property type="term" value="F:metal ion binding"/>
    <property type="evidence" value="ECO:0007669"/>
    <property type="project" value="UniProtKB-KW"/>
</dbReference>
<dbReference type="GO" id="GO:0004594">
    <property type="term" value="F:pantothenate kinase activity"/>
    <property type="evidence" value="ECO:0007669"/>
    <property type="project" value="UniProtKB-UniRule"/>
</dbReference>
<dbReference type="GO" id="GO:0015937">
    <property type="term" value="P:coenzyme A biosynthetic process"/>
    <property type="evidence" value="ECO:0007669"/>
    <property type="project" value="UniProtKB-UniRule"/>
</dbReference>
<dbReference type="CDD" id="cd24015">
    <property type="entry name" value="ASKHA_NBD_PanK-III"/>
    <property type="match status" value="1"/>
</dbReference>
<dbReference type="Gene3D" id="3.30.420.40">
    <property type="match status" value="2"/>
</dbReference>
<dbReference type="HAMAP" id="MF_01274">
    <property type="entry name" value="Pantothen_kinase_3"/>
    <property type="match status" value="1"/>
</dbReference>
<dbReference type="InterPro" id="IPR043129">
    <property type="entry name" value="ATPase_NBD"/>
</dbReference>
<dbReference type="InterPro" id="IPR004619">
    <property type="entry name" value="Type_III_PanK"/>
</dbReference>
<dbReference type="NCBIfam" id="TIGR00671">
    <property type="entry name" value="baf"/>
    <property type="match status" value="1"/>
</dbReference>
<dbReference type="NCBIfam" id="NF009845">
    <property type="entry name" value="PRK13318.1-3"/>
    <property type="match status" value="1"/>
</dbReference>
<dbReference type="NCBIfam" id="NF009855">
    <property type="entry name" value="PRK13321.1"/>
    <property type="match status" value="1"/>
</dbReference>
<dbReference type="PANTHER" id="PTHR34265">
    <property type="entry name" value="TYPE III PANTOTHENATE KINASE"/>
    <property type="match status" value="1"/>
</dbReference>
<dbReference type="PANTHER" id="PTHR34265:SF1">
    <property type="entry name" value="TYPE III PANTOTHENATE KINASE"/>
    <property type="match status" value="1"/>
</dbReference>
<dbReference type="Pfam" id="PF03309">
    <property type="entry name" value="Pan_kinase"/>
    <property type="match status" value="1"/>
</dbReference>
<dbReference type="SUPFAM" id="SSF53067">
    <property type="entry name" value="Actin-like ATPase domain"/>
    <property type="match status" value="2"/>
</dbReference>
<accession>Q5Z2U1</accession>
<organism>
    <name type="scientific">Nocardia farcinica (strain IFM 10152)</name>
    <dbReference type="NCBI Taxonomy" id="247156"/>
    <lineage>
        <taxon>Bacteria</taxon>
        <taxon>Bacillati</taxon>
        <taxon>Actinomycetota</taxon>
        <taxon>Actinomycetes</taxon>
        <taxon>Mycobacteriales</taxon>
        <taxon>Nocardiaceae</taxon>
        <taxon>Nocardia</taxon>
    </lineage>
</organism>
<reference key="1">
    <citation type="journal article" date="2004" name="Proc. Natl. Acad. Sci. U.S.A.">
        <title>The complete genomic sequence of Nocardia farcinica IFM 10152.</title>
        <authorList>
            <person name="Ishikawa J."/>
            <person name="Yamashita A."/>
            <person name="Mikami Y."/>
            <person name="Hoshino Y."/>
            <person name="Kurita H."/>
            <person name="Hotta K."/>
            <person name="Shiba T."/>
            <person name="Hattori M."/>
        </authorList>
    </citation>
    <scope>NUCLEOTIDE SEQUENCE [LARGE SCALE GENOMIC DNA]</scope>
    <source>
        <strain>IFM 10152</strain>
    </source>
</reference>
<protein>
    <recommendedName>
        <fullName evidence="1">Type III pantothenate kinase</fullName>
        <ecNumber evidence="1">2.7.1.33</ecNumber>
    </recommendedName>
    <alternativeName>
        <fullName evidence="1">PanK-III</fullName>
    </alternativeName>
    <alternativeName>
        <fullName evidence="1">Pantothenic acid kinase</fullName>
    </alternativeName>
</protein>
<proteinExistence type="inferred from homology"/>
<comment type="function">
    <text evidence="1">Catalyzes the phosphorylation of pantothenate (Pan), the first step in CoA biosynthesis.</text>
</comment>
<comment type="catalytic activity">
    <reaction evidence="1">
        <text>(R)-pantothenate + ATP = (R)-4'-phosphopantothenate + ADP + H(+)</text>
        <dbReference type="Rhea" id="RHEA:16373"/>
        <dbReference type="ChEBI" id="CHEBI:10986"/>
        <dbReference type="ChEBI" id="CHEBI:15378"/>
        <dbReference type="ChEBI" id="CHEBI:29032"/>
        <dbReference type="ChEBI" id="CHEBI:30616"/>
        <dbReference type="ChEBI" id="CHEBI:456216"/>
        <dbReference type="EC" id="2.7.1.33"/>
    </reaction>
</comment>
<comment type="cofactor">
    <cofactor evidence="1">
        <name>NH4(+)</name>
        <dbReference type="ChEBI" id="CHEBI:28938"/>
    </cofactor>
    <cofactor evidence="1">
        <name>K(+)</name>
        <dbReference type="ChEBI" id="CHEBI:29103"/>
    </cofactor>
    <text evidence="1">A monovalent cation. Ammonium or potassium.</text>
</comment>
<comment type="pathway">
    <text evidence="1">Cofactor biosynthesis; coenzyme A biosynthesis; CoA from (R)-pantothenate: step 1/5.</text>
</comment>
<comment type="subunit">
    <text evidence="1">Homodimer.</text>
</comment>
<comment type="subcellular location">
    <subcellularLocation>
        <location evidence="1">Cytoplasm</location>
    </subcellularLocation>
</comment>
<comment type="similarity">
    <text evidence="1">Belongs to the type III pantothenate kinase family.</text>
</comment>
<keyword id="KW-0067">ATP-binding</keyword>
<keyword id="KW-0173">Coenzyme A biosynthesis</keyword>
<keyword id="KW-0963">Cytoplasm</keyword>
<keyword id="KW-0418">Kinase</keyword>
<keyword id="KW-0479">Metal-binding</keyword>
<keyword id="KW-0547">Nucleotide-binding</keyword>
<keyword id="KW-0630">Potassium</keyword>
<keyword id="KW-1185">Reference proteome</keyword>
<keyword id="KW-0808">Transferase</keyword>
<gene>
    <name evidence="1" type="primary">coaX</name>
    <name type="ordered locus">NFA_4080</name>
</gene>
<feature type="chain" id="PRO_0000267569" description="Type III pantothenate kinase">
    <location>
        <begin position="1"/>
        <end position="264"/>
    </location>
</feature>
<feature type="active site" description="Proton acceptor" evidence="1">
    <location>
        <position position="111"/>
    </location>
</feature>
<feature type="binding site" evidence="1">
    <location>
        <begin position="6"/>
        <end position="13"/>
    </location>
    <ligand>
        <name>ATP</name>
        <dbReference type="ChEBI" id="CHEBI:30616"/>
    </ligand>
</feature>
<feature type="binding site" evidence="1">
    <location>
        <begin position="109"/>
        <end position="112"/>
    </location>
    <ligand>
        <name>substrate</name>
    </ligand>
</feature>
<feature type="binding site" evidence="1">
    <location>
        <position position="131"/>
    </location>
    <ligand>
        <name>K(+)</name>
        <dbReference type="ChEBI" id="CHEBI:29103"/>
    </ligand>
</feature>
<feature type="binding site" evidence="1">
    <location>
        <position position="134"/>
    </location>
    <ligand>
        <name>ATP</name>
        <dbReference type="ChEBI" id="CHEBI:30616"/>
    </ligand>
</feature>
<feature type="binding site" evidence="1">
    <location>
        <position position="185"/>
    </location>
    <ligand>
        <name>substrate</name>
    </ligand>
</feature>
<name>COAX_NOCFA</name>